<dbReference type="EC" id="5.3.1.-"/>
<dbReference type="EMBL" id="AE006914">
    <property type="protein sequence ID" value="AAL02940.1"/>
    <property type="molecule type" value="Genomic_DNA"/>
</dbReference>
<dbReference type="PIR" id="B97750">
    <property type="entry name" value="B97750"/>
</dbReference>
<dbReference type="SMR" id="Q92IL8"/>
<dbReference type="GeneID" id="928667"/>
<dbReference type="KEGG" id="rco:RC0402"/>
<dbReference type="HOGENOM" id="CLU_091396_4_1_5"/>
<dbReference type="Proteomes" id="UP000000816">
    <property type="component" value="Chromosome"/>
</dbReference>
<dbReference type="GO" id="GO:0016861">
    <property type="term" value="F:intramolecular oxidoreductase activity, interconverting aldoses and ketoses"/>
    <property type="evidence" value="ECO:0007669"/>
    <property type="project" value="UniProtKB-ARBA"/>
</dbReference>
<dbReference type="GO" id="GO:0005975">
    <property type="term" value="P:carbohydrate metabolic process"/>
    <property type="evidence" value="ECO:0007669"/>
    <property type="project" value="InterPro"/>
</dbReference>
<dbReference type="Gene3D" id="3.40.1400.10">
    <property type="entry name" value="Sugar-phosphate isomerase, RpiB/LacA/LacB"/>
    <property type="match status" value="1"/>
</dbReference>
<dbReference type="InterPro" id="IPR004785">
    <property type="entry name" value="RpiB"/>
</dbReference>
<dbReference type="InterPro" id="IPR003500">
    <property type="entry name" value="RpiB_LacA_LacB"/>
</dbReference>
<dbReference type="InterPro" id="IPR036569">
    <property type="entry name" value="RpiB_LacA_LacB_sf"/>
</dbReference>
<dbReference type="NCBIfam" id="NF004051">
    <property type="entry name" value="PRK05571.1"/>
    <property type="match status" value="1"/>
</dbReference>
<dbReference type="NCBIfam" id="TIGR01120">
    <property type="entry name" value="rpiB"/>
    <property type="match status" value="1"/>
</dbReference>
<dbReference type="NCBIfam" id="TIGR00689">
    <property type="entry name" value="rpiB_lacA_lacB"/>
    <property type="match status" value="1"/>
</dbReference>
<dbReference type="PANTHER" id="PTHR30345:SF0">
    <property type="entry name" value="DNA DAMAGE-REPAIR_TOLERATION PROTEIN DRT102"/>
    <property type="match status" value="1"/>
</dbReference>
<dbReference type="PANTHER" id="PTHR30345">
    <property type="entry name" value="RIBOSE-5-PHOSPHATE ISOMERASE B"/>
    <property type="match status" value="1"/>
</dbReference>
<dbReference type="Pfam" id="PF02502">
    <property type="entry name" value="LacAB_rpiB"/>
    <property type="match status" value="1"/>
</dbReference>
<dbReference type="PIRSF" id="PIRSF005384">
    <property type="entry name" value="RpiB_LacA_B"/>
    <property type="match status" value="1"/>
</dbReference>
<dbReference type="SUPFAM" id="SSF89623">
    <property type="entry name" value="Ribose/Galactose isomerase RpiB/AlsB"/>
    <property type="match status" value="1"/>
</dbReference>
<name>Y402_RICCN</name>
<reference key="1">
    <citation type="journal article" date="2001" name="Science">
        <title>Mechanisms of evolution in Rickettsia conorii and R. prowazekii.</title>
        <authorList>
            <person name="Ogata H."/>
            <person name="Audic S."/>
            <person name="Renesto-Audiffren P."/>
            <person name="Fournier P.-E."/>
            <person name="Barbe V."/>
            <person name="Samson D."/>
            <person name="Roux V."/>
            <person name="Cossart P."/>
            <person name="Weissenbach J."/>
            <person name="Claverie J.-M."/>
            <person name="Raoult D."/>
        </authorList>
    </citation>
    <scope>NUCLEOTIDE SEQUENCE [LARGE SCALE GENOMIC DNA]</scope>
    <source>
        <strain>ATCC VR-613 / Malish 7</strain>
    </source>
</reference>
<accession>Q92IL8</accession>
<proteinExistence type="inferred from homology"/>
<sequence>MKTYNIVIASDHSGYELKSEIINYLEQKSLKIYDCGTNNTQTVDYPDYAKKVVDIIIEKSAPIGILISDTGIGMSIAANRSSEIRAALCNNILTAENAKAHNDANILILGAKTIDQKIVFDIIDKFLTTQFEGGRHSTRLSKIK</sequence>
<gene>
    <name type="ordered locus">RC0402</name>
</gene>
<feature type="chain" id="PRO_0000269486" description="Putative sugar phosphate isomerase RC0402">
    <location>
        <begin position="1"/>
        <end position="144"/>
    </location>
</feature>
<feature type="active site" description="Proton donor" evidence="1">
    <location>
        <position position="101"/>
    </location>
</feature>
<feature type="binding site" evidence="1">
    <location>
        <position position="12"/>
    </location>
    <ligand>
        <name>substrate</name>
    </ligand>
</feature>
<feature type="binding site" evidence="1">
    <location>
        <position position="135"/>
    </location>
    <ligand>
        <name>substrate</name>
    </ligand>
</feature>
<evidence type="ECO:0000250" key="1"/>
<evidence type="ECO:0000305" key="2"/>
<keyword id="KW-0413">Isomerase</keyword>
<comment type="similarity">
    <text evidence="2">Belongs to the LacAB/RpiB family.</text>
</comment>
<protein>
    <recommendedName>
        <fullName>Putative sugar phosphate isomerase RC0402</fullName>
        <ecNumber>5.3.1.-</ecNumber>
    </recommendedName>
</protein>
<organism>
    <name type="scientific">Rickettsia conorii (strain ATCC VR-613 / Malish 7)</name>
    <dbReference type="NCBI Taxonomy" id="272944"/>
    <lineage>
        <taxon>Bacteria</taxon>
        <taxon>Pseudomonadati</taxon>
        <taxon>Pseudomonadota</taxon>
        <taxon>Alphaproteobacteria</taxon>
        <taxon>Rickettsiales</taxon>
        <taxon>Rickettsiaceae</taxon>
        <taxon>Rickettsieae</taxon>
        <taxon>Rickettsia</taxon>
        <taxon>spotted fever group</taxon>
    </lineage>
</organism>